<name>U17L7_HUMAN</name>
<accession>P0C7H9</accession>
<evidence type="ECO:0000250" key="1"/>
<evidence type="ECO:0000256" key="2">
    <source>
        <dbReference type="SAM" id="MobiDB-lite"/>
    </source>
</evidence>
<evidence type="ECO:0000305" key="3"/>
<dbReference type="EMBL" id="AC130366">
    <property type="status" value="NOT_ANNOTATED_CDS"/>
    <property type="molecule type" value="Genomic_DNA"/>
</dbReference>
<dbReference type="CCDS" id="CCDS78305.1"/>
<dbReference type="RefSeq" id="NP_001243798.1">
    <property type="nucleotide sequence ID" value="NM_001256869.2"/>
</dbReference>
<dbReference type="SMR" id="P0C7H9"/>
<dbReference type="BioGRID" id="134130">
    <property type="interactions" value="6"/>
</dbReference>
<dbReference type="FunCoup" id="P0C7H9">
    <property type="interactions" value="56"/>
</dbReference>
<dbReference type="IntAct" id="P0C7H9">
    <property type="interactions" value="3"/>
</dbReference>
<dbReference type="STRING" id="9606.ENSP00000485337"/>
<dbReference type="MEROPS" id="C19.984"/>
<dbReference type="BioMuta" id="USP17L7"/>
<dbReference type="DMDM" id="187653908"/>
<dbReference type="PaxDb" id="9606-ENSP00000485337"/>
<dbReference type="PeptideAtlas" id="P0C7H9"/>
<dbReference type="ProteomicsDB" id="52335"/>
<dbReference type="Antibodypedia" id="74359">
    <property type="antibodies" value="11 antibodies from 5 providers"/>
</dbReference>
<dbReference type="DNASU" id="392197"/>
<dbReference type="Ensembl" id="ENST00000530447.5">
    <property type="protein sequence ID" value="ENSP00000485337.2"/>
    <property type="gene ID" value="ENSG00000226430.7"/>
</dbReference>
<dbReference type="GeneID" id="392197"/>
<dbReference type="KEGG" id="hsa:392197"/>
<dbReference type="MANE-Select" id="ENST00000530447.5">
    <property type="protein sequence ID" value="ENSP00000485337.2"/>
    <property type="RefSeq nucleotide sequence ID" value="NM_001256869.2"/>
    <property type="RefSeq protein sequence ID" value="NP_001243798.1"/>
</dbReference>
<dbReference type="UCSC" id="uc031tag.2">
    <property type="organism name" value="human"/>
</dbReference>
<dbReference type="AGR" id="HGNC:37180"/>
<dbReference type="CTD" id="392197"/>
<dbReference type="GeneCards" id="USP17L7"/>
<dbReference type="HGNC" id="HGNC:37180">
    <property type="gene designation" value="USP17L7"/>
</dbReference>
<dbReference type="HPA" id="ENSG00000226430">
    <property type="expression patterns" value="Not detected"/>
</dbReference>
<dbReference type="neXtProt" id="NX_P0C7H9"/>
<dbReference type="OpenTargets" id="ENSG00000226430"/>
<dbReference type="VEuPathDB" id="HostDB:ENSG00000226430"/>
<dbReference type="eggNOG" id="KOG1865">
    <property type="taxonomic scope" value="Eukaryota"/>
</dbReference>
<dbReference type="GeneTree" id="ENSGT00940000161948"/>
<dbReference type="HOGENOM" id="CLU_008279_10_0_1"/>
<dbReference type="InParanoid" id="P0C7H9"/>
<dbReference type="OrthoDB" id="9523253at2759"/>
<dbReference type="PAN-GO" id="P0C7H9">
    <property type="GO annotations" value="6 GO annotations based on evolutionary models"/>
</dbReference>
<dbReference type="PhylomeDB" id="P0C7H9"/>
<dbReference type="PathwayCommons" id="P0C7H9"/>
<dbReference type="BioGRID-ORCS" id="392197">
    <property type="hits" value="12 hits in 225 CRISPR screens"/>
</dbReference>
<dbReference type="GenomeRNAi" id="392197"/>
<dbReference type="Pharos" id="P0C7H9">
    <property type="development level" value="Tdark"/>
</dbReference>
<dbReference type="PRO" id="PR:P0C7H9"/>
<dbReference type="Proteomes" id="UP000005640">
    <property type="component" value="Chromosome 8"/>
</dbReference>
<dbReference type="RNAct" id="P0C7H9">
    <property type="molecule type" value="protein"/>
</dbReference>
<dbReference type="Bgee" id="ENSG00000226430">
    <property type="expression patterns" value="Expressed in sural nerve and 3 other cell types or tissues"/>
</dbReference>
<dbReference type="GO" id="GO:0005829">
    <property type="term" value="C:cytosol"/>
    <property type="evidence" value="ECO:0000318"/>
    <property type="project" value="GO_Central"/>
</dbReference>
<dbReference type="GO" id="GO:0005783">
    <property type="term" value="C:endoplasmic reticulum"/>
    <property type="evidence" value="ECO:0007669"/>
    <property type="project" value="UniProtKB-SubCell"/>
</dbReference>
<dbReference type="GO" id="GO:0005634">
    <property type="term" value="C:nucleus"/>
    <property type="evidence" value="ECO:0000318"/>
    <property type="project" value="GO_Central"/>
</dbReference>
<dbReference type="GO" id="GO:0004843">
    <property type="term" value="F:cysteine-type deubiquitinase activity"/>
    <property type="evidence" value="ECO:0000318"/>
    <property type="project" value="GO_Central"/>
</dbReference>
<dbReference type="GO" id="GO:0016579">
    <property type="term" value="P:protein deubiquitination"/>
    <property type="evidence" value="ECO:0007669"/>
    <property type="project" value="InterPro"/>
</dbReference>
<dbReference type="GO" id="GO:0042981">
    <property type="term" value="P:regulation of apoptotic process"/>
    <property type="evidence" value="ECO:0000318"/>
    <property type="project" value="GO_Central"/>
</dbReference>
<dbReference type="GO" id="GO:0031647">
    <property type="term" value="P:regulation of protein stability"/>
    <property type="evidence" value="ECO:0000318"/>
    <property type="project" value="GO_Central"/>
</dbReference>
<dbReference type="CDD" id="cd02661">
    <property type="entry name" value="Peptidase_C19E"/>
    <property type="match status" value="1"/>
</dbReference>
<dbReference type="FunFam" id="3.90.70.10:FF:000070">
    <property type="entry name" value="Ubiquitin carboxyl-terminal hydrolase 17-like protein 17"/>
    <property type="match status" value="1"/>
</dbReference>
<dbReference type="Gene3D" id="3.90.70.10">
    <property type="entry name" value="Cysteine proteinases"/>
    <property type="match status" value="1"/>
</dbReference>
<dbReference type="InterPro" id="IPR038765">
    <property type="entry name" value="Papain-like_cys_pep_sf"/>
</dbReference>
<dbReference type="InterPro" id="IPR050164">
    <property type="entry name" value="Peptidase_C19"/>
</dbReference>
<dbReference type="InterPro" id="IPR001394">
    <property type="entry name" value="Peptidase_C19_UCH"/>
</dbReference>
<dbReference type="InterPro" id="IPR018200">
    <property type="entry name" value="USP_CS"/>
</dbReference>
<dbReference type="InterPro" id="IPR028889">
    <property type="entry name" value="USP_dom"/>
</dbReference>
<dbReference type="PANTHER" id="PTHR24006:SF651">
    <property type="entry name" value="INACTIVE UBIQUITIN CARBOXYL-TERMINAL HYDROLASE 17-LIKE PROTEIN 4-RELATED"/>
    <property type="match status" value="1"/>
</dbReference>
<dbReference type="PANTHER" id="PTHR24006">
    <property type="entry name" value="UBIQUITIN CARBOXYL-TERMINAL HYDROLASE"/>
    <property type="match status" value="1"/>
</dbReference>
<dbReference type="Pfam" id="PF00443">
    <property type="entry name" value="UCH"/>
    <property type="match status" value="1"/>
</dbReference>
<dbReference type="SUPFAM" id="SSF54001">
    <property type="entry name" value="Cysteine proteinases"/>
    <property type="match status" value="1"/>
</dbReference>
<dbReference type="PROSITE" id="PS00973">
    <property type="entry name" value="USP_2"/>
    <property type="match status" value="1"/>
</dbReference>
<dbReference type="PROSITE" id="PS50235">
    <property type="entry name" value="USP_3"/>
    <property type="match status" value="1"/>
</dbReference>
<proteinExistence type="inferred from homology"/>
<gene>
    <name type="primary">USP17L7</name>
</gene>
<reference key="1">
    <citation type="journal article" date="2006" name="Nature">
        <title>DNA sequence and analysis of human chromosome 8.</title>
        <authorList>
            <person name="Nusbaum C."/>
            <person name="Mikkelsen T.S."/>
            <person name="Zody M.C."/>
            <person name="Asakawa S."/>
            <person name="Taudien S."/>
            <person name="Garber M."/>
            <person name="Kodira C.D."/>
            <person name="Schueler M.G."/>
            <person name="Shimizu A."/>
            <person name="Whittaker C.A."/>
            <person name="Chang J.L."/>
            <person name="Cuomo C.A."/>
            <person name="Dewar K."/>
            <person name="FitzGerald M.G."/>
            <person name="Yang X."/>
            <person name="Allen N.R."/>
            <person name="Anderson S."/>
            <person name="Asakawa T."/>
            <person name="Blechschmidt K."/>
            <person name="Bloom T."/>
            <person name="Borowsky M.L."/>
            <person name="Butler J."/>
            <person name="Cook A."/>
            <person name="Corum B."/>
            <person name="DeArellano K."/>
            <person name="DeCaprio D."/>
            <person name="Dooley K.T."/>
            <person name="Dorris L. III"/>
            <person name="Engels R."/>
            <person name="Gloeckner G."/>
            <person name="Hafez N."/>
            <person name="Hagopian D.S."/>
            <person name="Hall J.L."/>
            <person name="Ishikawa S.K."/>
            <person name="Jaffe D.B."/>
            <person name="Kamat A."/>
            <person name="Kudoh J."/>
            <person name="Lehmann R."/>
            <person name="Lokitsang T."/>
            <person name="Macdonald P."/>
            <person name="Major J.E."/>
            <person name="Matthews C.D."/>
            <person name="Mauceli E."/>
            <person name="Menzel U."/>
            <person name="Mihalev A.H."/>
            <person name="Minoshima S."/>
            <person name="Murayama Y."/>
            <person name="Naylor J.W."/>
            <person name="Nicol R."/>
            <person name="Nguyen C."/>
            <person name="O'Leary S.B."/>
            <person name="O'Neill K."/>
            <person name="Parker S.C.J."/>
            <person name="Polley A."/>
            <person name="Raymond C.K."/>
            <person name="Reichwald K."/>
            <person name="Rodriguez J."/>
            <person name="Sasaki T."/>
            <person name="Schilhabel M."/>
            <person name="Siddiqui R."/>
            <person name="Smith C.L."/>
            <person name="Sneddon T.P."/>
            <person name="Talamas J.A."/>
            <person name="Tenzin P."/>
            <person name="Topham K."/>
            <person name="Venkataraman V."/>
            <person name="Wen G."/>
            <person name="Yamazaki S."/>
            <person name="Young S.K."/>
            <person name="Zeng Q."/>
            <person name="Zimmer A.R."/>
            <person name="Rosenthal A."/>
            <person name="Birren B.W."/>
            <person name="Platzer M."/>
            <person name="Shimizu N."/>
            <person name="Lander E.S."/>
        </authorList>
    </citation>
    <scope>NUCLEOTIDE SEQUENCE [LARGE SCALE GENOMIC DNA]</scope>
</reference>
<reference key="2">
    <citation type="journal article" date="2005" name="Genomics">
        <title>The DUB/USP17 deubiquitinating enzymes, a multigene family within a tandemly repeated sequence.</title>
        <authorList>
            <person name="Burrows J.F."/>
            <person name="McGrattan M.J."/>
            <person name="Johnston J.A."/>
        </authorList>
    </citation>
    <scope>NOMENCLATURE</scope>
</reference>
<reference key="3">
    <citation type="journal article" date="2006" name="BMC Genomics">
        <title>Hyaluronan- and RNA-binding deubiquitinating enzymes of USP17 family members associated with cell viability.</title>
        <authorList>
            <person name="Shin J.-M."/>
            <person name="Yoo K.-J."/>
            <person name="Kim M.-S."/>
            <person name="Kim D."/>
            <person name="Baek K.-H."/>
        </authorList>
    </citation>
    <scope>NOMENCLATURE</scope>
</reference>
<protein>
    <recommendedName>
        <fullName>Inactive ubiquitin carboxyl-terminal hydrolase 17-like protein 7</fullName>
    </recommendedName>
</protein>
<keyword id="KW-0256">Endoplasmic reticulum</keyword>
<keyword id="KW-0539">Nucleus</keyword>
<keyword id="KW-1185">Reference proteome</keyword>
<feature type="chain" id="PRO_0000331649" description="Inactive ubiquitin carboxyl-terminal hydrolase 17-like protein 7">
    <location>
        <begin position="1"/>
        <end position="530"/>
    </location>
</feature>
<feature type="domain" description="USP">
    <location>
        <begin position="80"/>
        <end position="375"/>
    </location>
</feature>
<feature type="region of interest" description="Disordered" evidence="2">
    <location>
        <begin position="382"/>
        <end position="412"/>
    </location>
</feature>
<feature type="region of interest" description="Disordered" evidence="2">
    <location>
        <begin position="431"/>
        <end position="454"/>
    </location>
</feature>
<feature type="region of interest" description="Disordered" evidence="2">
    <location>
        <begin position="490"/>
        <end position="530"/>
    </location>
</feature>
<feature type="compositionally biased region" description="Basic and acidic residues" evidence="2">
    <location>
        <begin position="382"/>
        <end position="392"/>
    </location>
</feature>
<feature type="compositionally biased region" description="Polar residues" evidence="2">
    <location>
        <begin position="490"/>
        <end position="512"/>
    </location>
</feature>
<feature type="compositionally biased region" description="Basic residues" evidence="2">
    <location>
        <begin position="513"/>
        <end position="524"/>
    </location>
</feature>
<feature type="sequence variant" id="VAR_051526" description="In dbSNP:rs17815120.">
    <original>A</original>
    <variation>G</variation>
    <location>
        <position position="161"/>
    </location>
</feature>
<feature type="sequence variant" id="VAR_051527" description="In dbSNP:rs9694759.">
    <original>P</original>
    <variation>L</variation>
    <location>
        <position position="494"/>
    </location>
</feature>
<sequence length="530" mass="59751">MEDDSLYLGGDWQFNHFSKLTSSRLDAAFAEIQRTSLSEKSPLSSETRFDLCDDLAPVARQLAPREKLPLSSRRPAAVGAGLQKIGNTFYVNVSLQCLTYTLPLSNYMLSREDSQTCHLHKCCMFCTMQAHITWALHSPGHVIQPSQVLAAGFHRGEQEDAHEFLMFTVDAMKKACLPGHKQLDHHSKDTTLIHQIFGAYWRSQIKYLHCHGVSDTFDPYLDIALDIQAAQSVKQALEQLVKPKELNGENAYHCGLCLQKAPASKTLTLPTSAKVLILVLKRFSDVTGNKLAKNVQYPKCRDMQPYMSQQNTGPLVYVLYAVLVHAGWSCHNGHYFSYVKAQEGQWYKMDDAEVTASGITSVLSQQAYVLFYIQKSEWERHSESVSRGREPRALGAEDTDRPATQGELKRDHPCLQVPELDEHLVERATQESTLDHWKFPQEQNKTKPEFNVRKVEGTLPPNVLVIHQSKYKCGMKNHHPEQQSSLLNLSSTKPTDQESMNTGTLASLQGSTRRSKGNNKHSKRSLLVCQ</sequence>
<comment type="subcellular location">
    <subcellularLocation>
        <location evidence="1">Nucleus</location>
    </subcellularLocation>
    <subcellularLocation>
        <location evidence="1">Endoplasmic reticulum</location>
    </subcellularLocation>
</comment>
<comment type="similarity">
    <text evidence="3">Belongs to the peptidase C19 family. USP17 subfamily.</text>
</comment>
<comment type="caution">
    <text evidence="3">The RS447 megasatellite DNA is a highly polymorphic conserved tandem repetitive sequence which contains a copy of the USP17 gene. It is present with an interindividual variation in copy number, ranging from 20 to 103, and can be found in the genome both on chromosome 4 and chromosome 8. The high similarity between the UPS17-like genes makes impossible to clearly assign data to one of the genes of the family. Oligonucleotides designed in RNAi experiments are for instance not specific of a given UPS17-like gene.</text>
</comment>
<comment type="caution">
    <text evidence="3">Phe-89 is present instead of the conserved Cys which is expected to be an active site residue suggesting that this protein has lost its catalytic activity.</text>
</comment>
<organism>
    <name type="scientific">Homo sapiens</name>
    <name type="common">Human</name>
    <dbReference type="NCBI Taxonomy" id="9606"/>
    <lineage>
        <taxon>Eukaryota</taxon>
        <taxon>Metazoa</taxon>
        <taxon>Chordata</taxon>
        <taxon>Craniata</taxon>
        <taxon>Vertebrata</taxon>
        <taxon>Euteleostomi</taxon>
        <taxon>Mammalia</taxon>
        <taxon>Eutheria</taxon>
        <taxon>Euarchontoglires</taxon>
        <taxon>Primates</taxon>
        <taxon>Haplorrhini</taxon>
        <taxon>Catarrhini</taxon>
        <taxon>Hominidae</taxon>
        <taxon>Homo</taxon>
    </lineage>
</organism>